<evidence type="ECO:0000255" key="1"/>
<evidence type="ECO:0000255" key="2">
    <source>
        <dbReference type="PROSITE-ProRule" id="PRU00175"/>
    </source>
</evidence>
<evidence type="ECO:0000256" key="3">
    <source>
        <dbReference type="SAM" id="MobiDB-lite"/>
    </source>
</evidence>
<evidence type="ECO:0000269" key="4">
    <source>
    </source>
</evidence>
<evidence type="ECO:0000269" key="5">
    <source>
    </source>
</evidence>
<evidence type="ECO:0000269" key="6">
    <source>
    </source>
</evidence>
<evidence type="ECO:0000269" key="7">
    <source>
    </source>
</evidence>
<evidence type="ECO:0000269" key="8">
    <source>
    </source>
</evidence>
<evidence type="ECO:0000269" key="9">
    <source>
    </source>
</evidence>
<evidence type="ECO:0000269" key="10">
    <source>
    </source>
</evidence>
<evidence type="ECO:0000269" key="11">
    <source>
    </source>
</evidence>
<evidence type="ECO:0000303" key="12">
    <source>
    </source>
</evidence>
<evidence type="ECO:0000303" key="13">
    <source>
    </source>
</evidence>
<evidence type="ECO:0000303" key="14">
    <source>
    </source>
</evidence>
<evidence type="ECO:0000303" key="15">
    <source ref="3"/>
</evidence>
<evidence type="ECO:0000305" key="16"/>
<evidence type="ECO:0000312" key="17">
    <source>
        <dbReference type="HGNC" id="HGNC:10068"/>
    </source>
</evidence>
<evidence type="ECO:0007744" key="18">
    <source>
    </source>
</evidence>
<evidence type="ECO:0007744" key="19">
    <source>
    </source>
</evidence>
<evidence type="ECO:0007744" key="20">
    <source>
    </source>
</evidence>
<evidence type="ECO:0007744" key="21">
    <source>
    </source>
</evidence>
<reference key="1">
    <citation type="journal article" date="1997" name="Cytogenet. Cell Genet.">
        <title>Cloning, expression and mapping of a novel RING-finger gene (RNF5), a human homologue of a putative zinc-finger gene from Caenorhabditis elegans.</title>
        <authorList>
            <person name="Kyushiki H."/>
            <person name="Kuga Y."/>
            <person name="Suzuki M."/>
            <person name="Takahashi E."/>
            <person name="Horie M."/>
        </authorList>
    </citation>
    <scope>NUCLEOTIDE SEQUENCE [MRNA]</scope>
    <scope>TISSUE SPECIFICITY</scope>
</reference>
<reference key="2">
    <citation type="journal article" date="2001" name="J. Cell Sci.">
        <title>Rma1, a novel type of RING finger protein conserved from Arabidopsis to human, is a membrane-bound ubiquitin ligase.</title>
        <authorList>
            <person name="Matsuda N."/>
            <person name="Suzuki T."/>
            <person name="Tanaka K."/>
            <person name="Nakano A."/>
        </authorList>
    </citation>
    <scope>NUCLEOTIDE SEQUENCE [MRNA]</scope>
    <scope>FUNCTION</scope>
    <scope>MUTAGENESIS OF CYS-42</scope>
</reference>
<reference key="3">
    <citation type="submission" date="1999-07" db="EMBL/GenBank/DDBJ databases">
        <title>Characterisation of a novel gene, G16, in the class III region of the human major histocompatibility complex.</title>
        <authorList>
            <person name="Khanna A."/>
            <person name="Campbell R.D."/>
        </authorList>
    </citation>
    <scope>NUCLEOTIDE SEQUENCE [MRNA]</scope>
</reference>
<reference key="4">
    <citation type="journal article" date="2004" name="Nat. Genet.">
        <title>Complete sequencing and characterization of 21,243 full-length human cDNAs.</title>
        <authorList>
            <person name="Ota T."/>
            <person name="Suzuki Y."/>
            <person name="Nishikawa T."/>
            <person name="Otsuki T."/>
            <person name="Sugiyama T."/>
            <person name="Irie R."/>
            <person name="Wakamatsu A."/>
            <person name="Hayashi K."/>
            <person name="Sato H."/>
            <person name="Nagai K."/>
            <person name="Kimura K."/>
            <person name="Makita H."/>
            <person name="Sekine M."/>
            <person name="Obayashi M."/>
            <person name="Nishi T."/>
            <person name="Shibahara T."/>
            <person name="Tanaka T."/>
            <person name="Ishii S."/>
            <person name="Yamamoto J."/>
            <person name="Saito K."/>
            <person name="Kawai Y."/>
            <person name="Isono Y."/>
            <person name="Nakamura Y."/>
            <person name="Nagahari K."/>
            <person name="Murakami K."/>
            <person name="Yasuda T."/>
            <person name="Iwayanagi T."/>
            <person name="Wagatsuma M."/>
            <person name="Shiratori A."/>
            <person name="Sudo H."/>
            <person name="Hosoiri T."/>
            <person name="Kaku Y."/>
            <person name="Kodaira H."/>
            <person name="Kondo H."/>
            <person name="Sugawara M."/>
            <person name="Takahashi M."/>
            <person name="Kanda K."/>
            <person name="Yokoi T."/>
            <person name="Furuya T."/>
            <person name="Kikkawa E."/>
            <person name="Omura Y."/>
            <person name="Abe K."/>
            <person name="Kamihara K."/>
            <person name="Katsuta N."/>
            <person name="Sato K."/>
            <person name="Tanikawa M."/>
            <person name="Yamazaki M."/>
            <person name="Ninomiya K."/>
            <person name="Ishibashi T."/>
            <person name="Yamashita H."/>
            <person name="Murakawa K."/>
            <person name="Fujimori K."/>
            <person name="Tanai H."/>
            <person name="Kimata M."/>
            <person name="Watanabe M."/>
            <person name="Hiraoka S."/>
            <person name="Chiba Y."/>
            <person name="Ishida S."/>
            <person name="Ono Y."/>
            <person name="Takiguchi S."/>
            <person name="Watanabe S."/>
            <person name="Yosida M."/>
            <person name="Hotuta T."/>
            <person name="Kusano J."/>
            <person name="Kanehori K."/>
            <person name="Takahashi-Fujii A."/>
            <person name="Hara H."/>
            <person name="Tanase T.-O."/>
            <person name="Nomura Y."/>
            <person name="Togiya S."/>
            <person name="Komai F."/>
            <person name="Hara R."/>
            <person name="Takeuchi K."/>
            <person name="Arita M."/>
            <person name="Imose N."/>
            <person name="Musashino K."/>
            <person name="Yuuki H."/>
            <person name="Oshima A."/>
            <person name="Sasaki N."/>
            <person name="Aotsuka S."/>
            <person name="Yoshikawa Y."/>
            <person name="Matsunawa H."/>
            <person name="Ichihara T."/>
            <person name="Shiohata N."/>
            <person name="Sano S."/>
            <person name="Moriya S."/>
            <person name="Momiyama H."/>
            <person name="Satoh N."/>
            <person name="Takami S."/>
            <person name="Terashima Y."/>
            <person name="Suzuki O."/>
            <person name="Nakagawa S."/>
            <person name="Senoh A."/>
            <person name="Mizoguchi H."/>
            <person name="Goto Y."/>
            <person name="Shimizu F."/>
            <person name="Wakebe H."/>
            <person name="Hishigaki H."/>
            <person name="Watanabe T."/>
            <person name="Sugiyama A."/>
            <person name="Takemoto M."/>
            <person name="Kawakami B."/>
            <person name="Yamazaki M."/>
            <person name="Watanabe K."/>
            <person name="Kumagai A."/>
            <person name="Itakura S."/>
            <person name="Fukuzumi Y."/>
            <person name="Fujimori Y."/>
            <person name="Komiyama M."/>
            <person name="Tashiro H."/>
            <person name="Tanigami A."/>
            <person name="Fujiwara T."/>
            <person name="Ono T."/>
            <person name="Yamada K."/>
            <person name="Fujii Y."/>
            <person name="Ozaki K."/>
            <person name="Hirao M."/>
            <person name="Ohmori Y."/>
            <person name="Kawabata A."/>
            <person name="Hikiji T."/>
            <person name="Kobatake N."/>
            <person name="Inagaki H."/>
            <person name="Ikema Y."/>
            <person name="Okamoto S."/>
            <person name="Okitani R."/>
            <person name="Kawakami T."/>
            <person name="Noguchi S."/>
            <person name="Itoh T."/>
            <person name="Shigeta K."/>
            <person name="Senba T."/>
            <person name="Matsumura K."/>
            <person name="Nakajima Y."/>
            <person name="Mizuno T."/>
            <person name="Morinaga M."/>
            <person name="Sasaki M."/>
            <person name="Togashi T."/>
            <person name="Oyama M."/>
            <person name="Hata H."/>
            <person name="Watanabe M."/>
            <person name="Komatsu T."/>
            <person name="Mizushima-Sugano J."/>
            <person name="Satoh T."/>
            <person name="Shirai Y."/>
            <person name="Takahashi Y."/>
            <person name="Nakagawa K."/>
            <person name="Okumura K."/>
            <person name="Nagase T."/>
            <person name="Nomura N."/>
            <person name="Kikuchi H."/>
            <person name="Masuho Y."/>
            <person name="Yamashita R."/>
            <person name="Nakai K."/>
            <person name="Yada T."/>
            <person name="Nakamura Y."/>
            <person name="Ohara O."/>
            <person name="Isogai T."/>
            <person name="Sugano S."/>
        </authorList>
    </citation>
    <scope>NUCLEOTIDE SEQUENCE [LARGE SCALE MRNA]</scope>
    <source>
        <tissue>Brain</tissue>
    </source>
</reference>
<reference key="5">
    <citation type="submission" date="2003-05" db="EMBL/GenBank/DDBJ databases">
        <title>Cloning of human full-length CDSs in BD Creator(TM) system donor vector.</title>
        <authorList>
            <person name="Kalnine N."/>
            <person name="Chen X."/>
            <person name="Rolfs A."/>
            <person name="Halleck A."/>
            <person name="Hines L."/>
            <person name="Eisenstein S."/>
            <person name="Koundinya M."/>
            <person name="Raphael J."/>
            <person name="Moreira D."/>
            <person name="Kelley T."/>
            <person name="LaBaer J."/>
            <person name="Lin Y."/>
            <person name="Phelan M."/>
            <person name="Farmer A."/>
        </authorList>
    </citation>
    <scope>NUCLEOTIDE SEQUENCE [LARGE SCALE MRNA]</scope>
</reference>
<reference key="6">
    <citation type="journal article" date="2003" name="Genome Res.">
        <title>Analysis of the gene-dense major histocompatibility complex class III region and its comparison to mouse.</title>
        <authorList>
            <person name="Xie T."/>
            <person name="Rowen L."/>
            <person name="Aguado B."/>
            <person name="Ahearn M.E."/>
            <person name="Madan A."/>
            <person name="Qin S."/>
            <person name="Campbell R.D."/>
            <person name="Hood L."/>
        </authorList>
    </citation>
    <scope>NUCLEOTIDE SEQUENCE [LARGE SCALE GENOMIC DNA]</scope>
</reference>
<reference key="7">
    <citation type="journal article" date="2003" name="Nature">
        <title>The DNA sequence and analysis of human chromosome 6.</title>
        <authorList>
            <person name="Mungall A.J."/>
            <person name="Palmer S.A."/>
            <person name="Sims S.K."/>
            <person name="Edwards C.A."/>
            <person name="Ashurst J.L."/>
            <person name="Wilming L."/>
            <person name="Jones M.C."/>
            <person name="Horton R."/>
            <person name="Hunt S.E."/>
            <person name="Scott C.E."/>
            <person name="Gilbert J.G.R."/>
            <person name="Clamp M.E."/>
            <person name="Bethel G."/>
            <person name="Milne S."/>
            <person name="Ainscough R."/>
            <person name="Almeida J.P."/>
            <person name="Ambrose K.D."/>
            <person name="Andrews T.D."/>
            <person name="Ashwell R.I.S."/>
            <person name="Babbage A.K."/>
            <person name="Bagguley C.L."/>
            <person name="Bailey J."/>
            <person name="Banerjee R."/>
            <person name="Barker D.J."/>
            <person name="Barlow K.F."/>
            <person name="Bates K."/>
            <person name="Beare D.M."/>
            <person name="Beasley H."/>
            <person name="Beasley O."/>
            <person name="Bird C.P."/>
            <person name="Blakey S.E."/>
            <person name="Bray-Allen S."/>
            <person name="Brook J."/>
            <person name="Brown A.J."/>
            <person name="Brown J.Y."/>
            <person name="Burford D.C."/>
            <person name="Burrill W."/>
            <person name="Burton J."/>
            <person name="Carder C."/>
            <person name="Carter N.P."/>
            <person name="Chapman J.C."/>
            <person name="Clark S.Y."/>
            <person name="Clark G."/>
            <person name="Clee C.M."/>
            <person name="Clegg S."/>
            <person name="Cobley V."/>
            <person name="Collier R.E."/>
            <person name="Collins J.E."/>
            <person name="Colman L.K."/>
            <person name="Corby N.R."/>
            <person name="Coville G.J."/>
            <person name="Culley K.M."/>
            <person name="Dhami P."/>
            <person name="Davies J."/>
            <person name="Dunn M."/>
            <person name="Earthrowl M.E."/>
            <person name="Ellington A.E."/>
            <person name="Evans K.A."/>
            <person name="Faulkner L."/>
            <person name="Francis M.D."/>
            <person name="Frankish A."/>
            <person name="Frankland J."/>
            <person name="French L."/>
            <person name="Garner P."/>
            <person name="Garnett J."/>
            <person name="Ghori M.J."/>
            <person name="Gilby L.M."/>
            <person name="Gillson C.J."/>
            <person name="Glithero R.J."/>
            <person name="Grafham D.V."/>
            <person name="Grant M."/>
            <person name="Gribble S."/>
            <person name="Griffiths C."/>
            <person name="Griffiths M.N.D."/>
            <person name="Hall R."/>
            <person name="Halls K.S."/>
            <person name="Hammond S."/>
            <person name="Harley J.L."/>
            <person name="Hart E.A."/>
            <person name="Heath P.D."/>
            <person name="Heathcott R."/>
            <person name="Holmes S.J."/>
            <person name="Howden P.J."/>
            <person name="Howe K.L."/>
            <person name="Howell G.R."/>
            <person name="Huckle E."/>
            <person name="Humphray S.J."/>
            <person name="Humphries M.D."/>
            <person name="Hunt A.R."/>
            <person name="Johnson C.M."/>
            <person name="Joy A.A."/>
            <person name="Kay M."/>
            <person name="Keenan S.J."/>
            <person name="Kimberley A.M."/>
            <person name="King A."/>
            <person name="Laird G.K."/>
            <person name="Langford C."/>
            <person name="Lawlor S."/>
            <person name="Leongamornlert D.A."/>
            <person name="Leversha M."/>
            <person name="Lloyd C.R."/>
            <person name="Lloyd D.M."/>
            <person name="Loveland J.E."/>
            <person name="Lovell J."/>
            <person name="Martin S."/>
            <person name="Mashreghi-Mohammadi M."/>
            <person name="Maslen G.L."/>
            <person name="Matthews L."/>
            <person name="McCann O.T."/>
            <person name="McLaren S.J."/>
            <person name="McLay K."/>
            <person name="McMurray A."/>
            <person name="Moore M.J.F."/>
            <person name="Mullikin J.C."/>
            <person name="Niblett D."/>
            <person name="Nickerson T."/>
            <person name="Novik K.L."/>
            <person name="Oliver K."/>
            <person name="Overton-Larty E.K."/>
            <person name="Parker A."/>
            <person name="Patel R."/>
            <person name="Pearce A.V."/>
            <person name="Peck A.I."/>
            <person name="Phillimore B.J.C.T."/>
            <person name="Phillips S."/>
            <person name="Plumb R.W."/>
            <person name="Porter K.M."/>
            <person name="Ramsey Y."/>
            <person name="Ranby S.A."/>
            <person name="Rice C.M."/>
            <person name="Ross M.T."/>
            <person name="Searle S.M."/>
            <person name="Sehra H.K."/>
            <person name="Sheridan E."/>
            <person name="Skuce C.D."/>
            <person name="Smith S."/>
            <person name="Smith M."/>
            <person name="Spraggon L."/>
            <person name="Squares S.L."/>
            <person name="Steward C.A."/>
            <person name="Sycamore N."/>
            <person name="Tamlyn-Hall G."/>
            <person name="Tester J."/>
            <person name="Theaker A.J."/>
            <person name="Thomas D.W."/>
            <person name="Thorpe A."/>
            <person name="Tracey A."/>
            <person name="Tromans A."/>
            <person name="Tubby B."/>
            <person name="Wall M."/>
            <person name="Wallis J.M."/>
            <person name="West A.P."/>
            <person name="White S.S."/>
            <person name="Whitehead S.L."/>
            <person name="Whittaker H."/>
            <person name="Wild A."/>
            <person name="Willey D.J."/>
            <person name="Wilmer T.E."/>
            <person name="Wood J.M."/>
            <person name="Wray P.W."/>
            <person name="Wyatt J.C."/>
            <person name="Young L."/>
            <person name="Younger R.M."/>
            <person name="Bentley D.R."/>
            <person name="Coulson A."/>
            <person name="Durbin R.M."/>
            <person name="Hubbard T."/>
            <person name="Sulston J.E."/>
            <person name="Dunham I."/>
            <person name="Rogers J."/>
            <person name="Beck S."/>
        </authorList>
    </citation>
    <scope>NUCLEOTIDE SEQUENCE [LARGE SCALE GENOMIC DNA]</scope>
</reference>
<reference key="8">
    <citation type="journal article" date="2004" name="Genome Res.">
        <title>The status, quality, and expansion of the NIH full-length cDNA project: the Mammalian Gene Collection (MGC).</title>
        <authorList>
            <consortium name="The MGC Project Team"/>
        </authorList>
    </citation>
    <scope>NUCLEOTIDE SEQUENCE [LARGE SCALE MRNA]</scope>
    <source>
        <tissue>Lung</tissue>
    </source>
</reference>
<reference key="9">
    <citation type="journal article" date="2003" name="Mol. Cell. Biol.">
        <title>RNF5, a RING finger protein that regulates cell motility by targeting paxillin ubiquitination and altered localization.</title>
        <authorList>
            <person name="Didier C."/>
            <person name="Broday L."/>
            <person name="Bhoumik A."/>
            <person name="Israeli S."/>
            <person name="Takahashi S."/>
            <person name="Nakayama K."/>
            <person name="Thomas S.M."/>
            <person name="Turner C.E."/>
            <person name="Henderson S."/>
            <person name="Sabe H."/>
            <person name="Ronai Z."/>
        </authorList>
    </citation>
    <scope>FUNCTION</scope>
    <scope>SUBCELLULAR LOCATION</scope>
    <scope>INTERACTION WITH PXN</scope>
</reference>
<reference key="10">
    <citation type="journal article" date="2005" name="J. Biol. Chem.">
        <title>Recognition and ubiquitination of Salmonella type III effector SopA by a ubiquitin E3 ligase, HsRMA1.</title>
        <authorList>
            <person name="Zhang Y."/>
            <person name="Higashide W."/>
            <person name="Dai S."/>
            <person name="Sherman D.M."/>
            <person name="Zhou D."/>
        </authorList>
    </citation>
    <scope>FUNCTION</scope>
</reference>
<reference key="11">
    <citation type="journal article" date="2009" name="Anal. Chem.">
        <title>Lys-N and trypsin cover complementary parts of the phosphoproteome in a refined SCX-based approach.</title>
        <authorList>
            <person name="Gauci S."/>
            <person name="Helbig A.O."/>
            <person name="Slijper M."/>
            <person name="Krijgsveld J."/>
            <person name="Heck A.J."/>
            <person name="Mohammed S."/>
        </authorList>
    </citation>
    <scope>ACETYLATION [LARGE SCALE ANALYSIS] AT ALA-2</scope>
    <scope>CLEAVAGE OF INITIATOR METHIONINE [LARGE SCALE ANALYSIS]</scope>
    <scope>IDENTIFICATION BY MASS SPECTROMETRY [LARGE SCALE ANALYSIS]</scope>
</reference>
<reference key="12">
    <citation type="journal article" date="2009" name="Immunity">
        <title>The ubiquitin ligase RNF5 regulates antiviral responses by mediating degradation of the adaptor protein MITA.</title>
        <authorList>
            <person name="Zhong B."/>
            <person name="Zhang L."/>
            <person name="Lei C."/>
            <person name="Li Y."/>
            <person name="Mao A.P."/>
            <person name="Yang Y."/>
            <person name="Wang Y.Y."/>
            <person name="Zhang X.L."/>
            <person name="Shu H.B."/>
        </authorList>
    </citation>
    <scope>FUNCTION IN UBIQUITINATION OF STING1</scope>
    <scope>INTERACTION WITH STING1</scope>
    <scope>SUBCELLULAR LOCATION</scope>
</reference>
<reference key="13">
    <citation type="journal article" date="2009" name="J. Biol. Chem.">
        <title>Regulation of endoplasmic reticulum-associated degradation by RNF5-dependent ubiquitination of JNK-associated membrane protein (JAMP).</title>
        <authorList>
            <person name="Tcherpakov M."/>
            <person name="Delaunay A."/>
            <person name="Toth J."/>
            <person name="Kadoya T."/>
            <person name="Petroski M.D."/>
            <person name="Ronai Z.A."/>
        </authorList>
    </citation>
    <scope>FUNCTION IN UBIQUITINATION OF JKAMP</scope>
    <scope>INTERACTION WITH JKAMP</scope>
</reference>
<reference key="14">
    <citation type="journal article" date="2012" name="Mol. Cell. Proteomics">
        <title>Comparative large-scale characterisation of plant vs. mammal proteins reveals similar and idiosyncratic N-alpha acetylation features.</title>
        <authorList>
            <person name="Bienvenut W.V."/>
            <person name="Sumpton D."/>
            <person name="Martinez A."/>
            <person name="Lilla S."/>
            <person name="Espagne C."/>
            <person name="Meinnel T."/>
            <person name="Giglione C."/>
        </authorList>
    </citation>
    <scope>ACETYLATION [LARGE SCALE ANALYSIS] AT ALA-2</scope>
    <scope>CLEAVAGE OF INITIATOR METHIONINE [LARGE SCALE ANALYSIS]</scope>
    <scope>IDENTIFICATION BY MASS SPECTROMETRY [LARGE SCALE ANALYSIS]</scope>
</reference>
<reference key="15">
    <citation type="journal article" date="2012" name="PLoS Genet.">
        <title>Regulation of ATG4B stability by RNF5 limits basal levels of autophagy and influences susceptibility to bacterial infection.</title>
        <authorList>
            <person name="Kuang E."/>
            <person name="Okumura C.Y."/>
            <person name="Sheffy-Levin S."/>
            <person name="Varsano T."/>
            <person name="Shu V.C."/>
            <person name="Qi J."/>
            <person name="Niesman I.R."/>
            <person name="Yang H.J."/>
            <person name="Lopez-Otin C."/>
            <person name="Yang W.Y."/>
            <person name="Reed J.C."/>
            <person name="Broday L."/>
            <person name="Nizet V."/>
            <person name="Ronai Z.A."/>
        </authorList>
    </citation>
    <scope>FUNCTION</scope>
    <scope>CATALYTIC ACTIVITY</scope>
    <scope>PATHWAY</scope>
</reference>
<reference key="16">
    <citation type="journal article" date="2012" name="Proc. Natl. Acad. Sci. U.S.A.">
        <title>N-terminal acetylome analyses and functional insights of the N-terminal acetyltransferase NatB.</title>
        <authorList>
            <person name="Van Damme P."/>
            <person name="Lasa M."/>
            <person name="Polevoda B."/>
            <person name="Gazquez C."/>
            <person name="Elosegui-Artola A."/>
            <person name="Kim D.S."/>
            <person name="De Juan-Pardo E."/>
            <person name="Demeyer K."/>
            <person name="Hole K."/>
            <person name="Larrea E."/>
            <person name="Timmerman E."/>
            <person name="Prieto J."/>
            <person name="Arnesen T."/>
            <person name="Sherman F."/>
            <person name="Gevaert K."/>
            <person name="Aldabe R."/>
        </authorList>
    </citation>
    <scope>ACETYLATION [LARGE SCALE ANALYSIS] AT ALA-2</scope>
    <scope>CLEAVAGE OF INITIATOR METHIONINE [LARGE SCALE ANALYSIS]</scope>
    <scope>IDENTIFICATION BY MASS SPECTROMETRY [LARGE SCALE ANALYSIS]</scope>
</reference>
<reference key="17">
    <citation type="journal article" date="2013" name="J. Proteome Res.">
        <title>Toward a comprehensive characterization of a human cancer cell phosphoproteome.</title>
        <authorList>
            <person name="Zhou H."/>
            <person name="Di Palma S."/>
            <person name="Preisinger C."/>
            <person name="Peng M."/>
            <person name="Polat A.N."/>
            <person name="Heck A.J."/>
            <person name="Mohammed S."/>
        </authorList>
    </citation>
    <scope>PHOSPHORYLATION [LARGE SCALE ANALYSIS] AT SER-84; THR-94 AND SER-107</scope>
    <scope>IDENTIFICATION BY MASS SPECTROMETRY [LARGE SCALE ANALYSIS]</scope>
    <source>
        <tissue>Cervix carcinoma</tissue>
        <tissue>Erythroleukemia</tissue>
    </source>
</reference>
<reference key="18">
    <citation type="journal article" date="2014" name="J. Proteomics">
        <title>An enzyme assisted RP-RPLC approach for in-depth analysis of human liver phosphoproteome.</title>
        <authorList>
            <person name="Bian Y."/>
            <person name="Song C."/>
            <person name="Cheng K."/>
            <person name="Dong M."/>
            <person name="Wang F."/>
            <person name="Huang J."/>
            <person name="Sun D."/>
            <person name="Wang L."/>
            <person name="Ye M."/>
            <person name="Zou H."/>
        </authorList>
    </citation>
    <scope>IDENTIFICATION BY MASS SPECTROMETRY [LARGE SCALE ANALYSIS]</scope>
    <source>
        <tissue>Liver</tissue>
    </source>
</reference>
<reference key="19">
    <citation type="journal article" date="2015" name="Hum. Mol. Genet.">
        <title>Biochemical and cellular analysis of Ogden syndrome reveals downstream Nt-acetylation defects.</title>
        <authorList>
            <person name="Myklebust L.M."/>
            <person name="Van Damme P."/>
            <person name="Stoeve S.I."/>
            <person name="Doerfel M.J."/>
            <person name="Abboud A."/>
            <person name="Kalvik T.V."/>
            <person name="Grauffel C."/>
            <person name="Jonckheere V."/>
            <person name="Wu Y."/>
            <person name="Swensen J."/>
            <person name="Kaasa H."/>
            <person name="Liszczak G."/>
            <person name="Marmorstein R."/>
            <person name="Reuter N."/>
            <person name="Lyon G.J."/>
            <person name="Gevaert K."/>
            <person name="Arnesen T."/>
        </authorList>
    </citation>
    <scope>ACETYLATION AT ALA-2</scope>
    <scope>CLEAVAGE OF INITIATOR METHIONINE</scope>
</reference>
<accession>Q99942</accession>
<accession>A2BFI6</accession>
<accession>B2R4K3</accession>
<accession>Q0VDB7</accession>
<accession>Q9UMQ2</accession>
<keyword id="KW-0007">Acetylation</keyword>
<keyword id="KW-1003">Cell membrane</keyword>
<keyword id="KW-0256">Endoplasmic reticulum</keyword>
<keyword id="KW-0472">Membrane</keyword>
<keyword id="KW-0479">Metal-binding</keyword>
<keyword id="KW-0496">Mitochondrion</keyword>
<keyword id="KW-0597">Phosphoprotein</keyword>
<keyword id="KW-1267">Proteomics identification</keyword>
<keyword id="KW-1185">Reference proteome</keyword>
<keyword id="KW-0808">Transferase</keyword>
<keyword id="KW-0812">Transmembrane</keyword>
<keyword id="KW-1133">Transmembrane helix</keyword>
<keyword id="KW-0833">Ubl conjugation pathway</keyword>
<keyword id="KW-0862">Zinc</keyword>
<keyword id="KW-0863">Zinc-finger</keyword>
<name>RNF5_HUMAN</name>
<dbReference type="EC" id="2.3.2.27" evidence="7 8 9"/>
<dbReference type="EMBL" id="AB056869">
    <property type="protein sequence ID" value="BAB39359.1"/>
    <property type="molecule type" value="mRNA"/>
</dbReference>
<dbReference type="EMBL" id="AJ243936">
    <property type="protein sequence ID" value="CAB51286.1"/>
    <property type="molecule type" value="mRNA"/>
</dbReference>
<dbReference type="EMBL" id="AK311859">
    <property type="protein sequence ID" value="BAG34800.1"/>
    <property type="molecule type" value="mRNA"/>
</dbReference>
<dbReference type="EMBL" id="BT007105">
    <property type="protein sequence ID" value="AAP35769.1"/>
    <property type="molecule type" value="mRNA"/>
</dbReference>
<dbReference type="EMBL" id="U89336">
    <property type="protein sequence ID" value="AAB47492.1"/>
    <property type="molecule type" value="Genomic_DNA"/>
</dbReference>
<dbReference type="EMBL" id="AL845464">
    <property type="status" value="NOT_ANNOTATED_CDS"/>
    <property type="molecule type" value="Genomic_DNA"/>
</dbReference>
<dbReference type="EMBL" id="AL662884">
    <property type="status" value="NOT_ANNOTATED_CDS"/>
    <property type="molecule type" value="Genomic_DNA"/>
</dbReference>
<dbReference type="EMBL" id="AL662830">
    <property type="status" value="NOT_ANNOTATED_CDS"/>
    <property type="molecule type" value="Genomic_DNA"/>
</dbReference>
<dbReference type="EMBL" id="BX284686">
    <property type="status" value="NOT_ANNOTATED_CDS"/>
    <property type="molecule type" value="Genomic_DNA"/>
</dbReference>
<dbReference type="EMBL" id="BX927239">
    <property type="status" value="NOT_ANNOTATED_CDS"/>
    <property type="molecule type" value="Genomic_DNA"/>
</dbReference>
<dbReference type="EMBL" id="CR812478">
    <property type="status" value="NOT_ANNOTATED_CDS"/>
    <property type="molecule type" value="Genomic_DNA"/>
</dbReference>
<dbReference type="EMBL" id="CR933878">
    <property type="status" value="NOT_ANNOTATED_CDS"/>
    <property type="molecule type" value="Genomic_DNA"/>
</dbReference>
<dbReference type="EMBL" id="BC004155">
    <property type="protein sequence ID" value="AAH04155.1"/>
    <property type="molecule type" value="mRNA"/>
</dbReference>
<dbReference type="EMBL" id="BC111392">
    <property type="protein sequence ID" value="AAI11393.1"/>
    <property type="molecule type" value="mRNA"/>
</dbReference>
<dbReference type="EMBL" id="BC119741">
    <property type="protein sequence ID" value="AAI19742.1"/>
    <property type="molecule type" value="mRNA"/>
</dbReference>
<dbReference type="EMBL" id="BC119742">
    <property type="protein sequence ID" value="AAI19743.1"/>
    <property type="molecule type" value="mRNA"/>
</dbReference>
<dbReference type="EMBL" id="BC127651">
    <property type="protein sequence ID" value="AAI27652.1"/>
    <property type="molecule type" value="mRNA"/>
</dbReference>
<dbReference type="EMBL" id="BC127652">
    <property type="protein sequence ID" value="AAI27653.1"/>
    <property type="molecule type" value="mRNA"/>
</dbReference>
<dbReference type="EMBL" id="BC148255">
    <property type="protein sequence ID" value="AAI48256.1"/>
    <property type="molecule type" value="mRNA"/>
</dbReference>
<dbReference type="CCDS" id="CCDS4745.1"/>
<dbReference type="RefSeq" id="NP_008844.1">
    <property type="nucleotide sequence ID" value="NM_006913.4"/>
</dbReference>
<dbReference type="SMR" id="Q99942"/>
<dbReference type="BioGRID" id="111975">
    <property type="interactions" value="169"/>
</dbReference>
<dbReference type="DIP" id="DIP-29268N"/>
<dbReference type="FunCoup" id="Q99942">
    <property type="interactions" value="812"/>
</dbReference>
<dbReference type="IntAct" id="Q99942">
    <property type="interactions" value="93"/>
</dbReference>
<dbReference type="MINT" id="Q99942"/>
<dbReference type="STRING" id="9606.ENSP00000364235"/>
<dbReference type="ChEMBL" id="CHEMBL5465346"/>
<dbReference type="iPTMnet" id="Q99942"/>
<dbReference type="PhosphoSitePlus" id="Q99942"/>
<dbReference type="BioMuta" id="RNF5"/>
<dbReference type="DMDM" id="74762702"/>
<dbReference type="jPOST" id="Q99942"/>
<dbReference type="MassIVE" id="Q99942"/>
<dbReference type="PaxDb" id="9606-ENSP00000364235"/>
<dbReference type="PeptideAtlas" id="Q99942"/>
<dbReference type="ProteomicsDB" id="78533"/>
<dbReference type="Pumba" id="Q99942"/>
<dbReference type="TopDownProteomics" id="Q99942"/>
<dbReference type="Antibodypedia" id="28471">
    <property type="antibodies" value="230 antibodies from 30 providers"/>
</dbReference>
<dbReference type="DNASU" id="6048"/>
<dbReference type="Ensembl" id="ENST00000375094.4">
    <property type="protein sequence ID" value="ENSP00000364235.3"/>
    <property type="gene ID" value="ENSG00000204308.8"/>
</dbReference>
<dbReference type="Ensembl" id="ENST00000413786.2">
    <property type="protein sequence ID" value="ENSP00000387879.2"/>
    <property type="gene ID" value="ENSG00000225452.5"/>
</dbReference>
<dbReference type="Ensembl" id="ENST00000432616.2">
    <property type="protein sequence ID" value="ENSP00000413131.2"/>
    <property type="gene ID" value="ENSG00000183574.12"/>
</dbReference>
<dbReference type="Ensembl" id="ENST00000445885.6">
    <property type="protein sequence ID" value="ENSP00000401172.2"/>
    <property type="gene ID" value="ENSG00000227277.9"/>
</dbReference>
<dbReference type="Ensembl" id="ENST00000449794.2">
    <property type="protein sequence ID" value="ENSP00000415784.2"/>
    <property type="gene ID" value="ENSG00000223767.5"/>
</dbReference>
<dbReference type="Ensembl" id="ENST00000453473.2">
    <property type="protein sequence ID" value="ENSP00000415127.2"/>
    <property type="gene ID" value="ENSG00000228907.5"/>
</dbReference>
<dbReference type="Ensembl" id="ENST00000456167.2">
    <property type="protein sequence ID" value="ENSP00000388795.2"/>
    <property type="gene ID" value="ENSG00000228405.5"/>
</dbReference>
<dbReference type="GeneID" id="6048"/>
<dbReference type="KEGG" id="hsa:6048"/>
<dbReference type="MANE-Select" id="ENST00000375094.4">
    <property type="protein sequence ID" value="ENSP00000364235.3"/>
    <property type="RefSeq nucleotide sequence ID" value="NM_006913.4"/>
    <property type="RefSeq protein sequence ID" value="NP_008844.1"/>
</dbReference>
<dbReference type="UCSC" id="uc003oaj.5">
    <property type="organism name" value="human"/>
</dbReference>
<dbReference type="AGR" id="HGNC:10068"/>
<dbReference type="CTD" id="6048"/>
<dbReference type="DisGeNET" id="6048"/>
<dbReference type="GeneCards" id="RNF5"/>
<dbReference type="HGNC" id="HGNC:10068">
    <property type="gene designation" value="RNF5"/>
</dbReference>
<dbReference type="HPA" id="ENSG00000204308">
    <property type="expression patterns" value="Low tissue specificity"/>
</dbReference>
<dbReference type="MIM" id="602677">
    <property type="type" value="gene"/>
</dbReference>
<dbReference type="neXtProt" id="NX_Q99942"/>
<dbReference type="OpenTargets" id="ENSG00000204308"/>
<dbReference type="PharmGKB" id="PA34442"/>
<dbReference type="VEuPathDB" id="HostDB:ENSG00000204308"/>
<dbReference type="eggNOG" id="KOG0823">
    <property type="taxonomic scope" value="Eukaryota"/>
</dbReference>
<dbReference type="GeneTree" id="ENSGT00390000014107"/>
<dbReference type="HOGENOM" id="CLU_055198_2_1_1"/>
<dbReference type="InParanoid" id="Q99942"/>
<dbReference type="OMA" id="RAAFECN"/>
<dbReference type="OrthoDB" id="302966at2759"/>
<dbReference type="PAN-GO" id="Q99942">
    <property type="GO annotations" value="4 GO annotations based on evolutionary models"/>
</dbReference>
<dbReference type="PhylomeDB" id="Q99942"/>
<dbReference type="TreeFam" id="TF317334"/>
<dbReference type="PathwayCommons" id="Q99942"/>
<dbReference type="Reactome" id="R-HSA-382556">
    <property type="pathway name" value="ABC-family proteins mediated transport"/>
</dbReference>
<dbReference type="Reactome" id="R-HSA-5678895">
    <property type="pathway name" value="Defective CFTR causes cystic fibrosis"/>
</dbReference>
<dbReference type="Reactome" id="R-HSA-901032">
    <property type="pathway name" value="ER Quality Control Compartment (ERQC)"/>
</dbReference>
<dbReference type="SignaLink" id="Q99942"/>
<dbReference type="SIGNOR" id="Q99942"/>
<dbReference type="UniPathway" id="UPA00143"/>
<dbReference type="BioGRID-ORCS" id="6048">
    <property type="hits" value="104 hits in 1191 CRISPR screens"/>
</dbReference>
<dbReference type="GeneWiki" id="RNF5"/>
<dbReference type="GenomeRNAi" id="6048"/>
<dbReference type="Pharos" id="Q99942">
    <property type="development level" value="Tbio"/>
</dbReference>
<dbReference type="PRO" id="PR:Q99942"/>
<dbReference type="Proteomes" id="UP000005640">
    <property type="component" value="Chromosome 6"/>
</dbReference>
<dbReference type="RNAct" id="Q99942">
    <property type="molecule type" value="protein"/>
</dbReference>
<dbReference type="Bgee" id="ENSG00000204308">
    <property type="expression patterns" value="Expressed in ganglionic eminence and 103 other cell types or tissues"/>
</dbReference>
<dbReference type="ExpressionAtlas" id="Q99942">
    <property type="expression patterns" value="baseline and differential"/>
</dbReference>
<dbReference type="GO" id="GO:0005783">
    <property type="term" value="C:endoplasmic reticulum"/>
    <property type="evidence" value="ECO:0000314"/>
    <property type="project" value="HPA"/>
</dbReference>
<dbReference type="GO" id="GO:0005789">
    <property type="term" value="C:endoplasmic reticulum membrane"/>
    <property type="evidence" value="ECO:0000304"/>
    <property type="project" value="Reactome"/>
</dbReference>
<dbReference type="GO" id="GO:0044322">
    <property type="term" value="C:endoplasmic reticulum quality control compartment"/>
    <property type="evidence" value="ECO:0007669"/>
    <property type="project" value="GOC"/>
</dbReference>
<dbReference type="GO" id="GO:0031966">
    <property type="term" value="C:mitochondrial membrane"/>
    <property type="evidence" value="ECO:0007669"/>
    <property type="project" value="UniProtKB-SubCell"/>
</dbReference>
<dbReference type="GO" id="GO:0005886">
    <property type="term" value="C:plasma membrane"/>
    <property type="evidence" value="ECO:0007669"/>
    <property type="project" value="UniProtKB-SubCell"/>
</dbReference>
<dbReference type="GO" id="GO:0042802">
    <property type="term" value="F:identical protein binding"/>
    <property type="evidence" value="ECO:0000353"/>
    <property type="project" value="IntAct"/>
</dbReference>
<dbReference type="GO" id="GO:0044877">
    <property type="term" value="F:protein-containing complex binding"/>
    <property type="evidence" value="ECO:0000353"/>
    <property type="project" value="ParkinsonsUK-UCL"/>
</dbReference>
<dbReference type="GO" id="GO:0061630">
    <property type="term" value="F:ubiquitin protein ligase activity"/>
    <property type="evidence" value="ECO:0000318"/>
    <property type="project" value="GO_Central"/>
</dbReference>
<dbReference type="GO" id="GO:0044390">
    <property type="term" value="F:ubiquitin-like protein conjugating enzyme binding"/>
    <property type="evidence" value="ECO:0000318"/>
    <property type="project" value="GO_Central"/>
</dbReference>
<dbReference type="GO" id="GO:0004842">
    <property type="term" value="F:ubiquitin-protein transferase activity"/>
    <property type="evidence" value="ECO:0000314"/>
    <property type="project" value="UniProtKB"/>
</dbReference>
<dbReference type="GO" id="GO:0008270">
    <property type="term" value="F:zinc ion binding"/>
    <property type="evidence" value="ECO:0000304"/>
    <property type="project" value="ProtInc"/>
</dbReference>
<dbReference type="GO" id="GO:1904380">
    <property type="term" value="P:endoplasmic reticulum mannose trimming"/>
    <property type="evidence" value="ECO:0000304"/>
    <property type="project" value="Reactome"/>
</dbReference>
<dbReference type="GO" id="GO:0036503">
    <property type="term" value="P:ERAD pathway"/>
    <property type="evidence" value="ECO:0000315"/>
    <property type="project" value="UniProtKB"/>
</dbReference>
<dbReference type="GO" id="GO:0010507">
    <property type="term" value="P:negative regulation of autophagy"/>
    <property type="evidence" value="ECO:0007669"/>
    <property type="project" value="Ensembl"/>
</dbReference>
<dbReference type="GO" id="GO:0030163">
    <property type="term" value="P:protein catabolic process"/>
    <property type="evidence" value="ECO:0000315"/>
    <property type="project" value="UniProtKB"/>
</dbReference>
<dbReference type="GO" id="GO:0031648">
    <property type="term" value="P:protein destabilization"/>
    <property type="evidence" value="ECO:0007669"/>
    <property type="project" value="Ensembl"/>
</dbReference>
<dbReference type="GO" id="GO:0070936">
    <property type="term" value="P:protein K48-linked ubiquitination"/>
    <property type="evidence" value="ECO:0000314"/>
    <property type="project" value="UniProtKB"/>
</dbReference>
<dbReference type="GO" id="GO:0070534">
    <property type="term" value="P:protein K63-linked ubiquitination"/>
    <property type="evidence" value="ECO:0000314"/>
    <property type="project" value="UniProtKB"/>
</dbReference>
<dbReference type="GO" id="GO:2000785">
    <property type="term" value="P:regulation of autophagosome assembly"/>
    <property type="evidence" value="ECO:0007669"/>
    <property type="project" value="Ensembl"/>
</dbReference>
<dbReference type="GO" id="GO:0009617">
    <property type="term" value="P:response to bacterium"/>
    <property type="evidence" value="ECO:0007669"/>
    <property type="project" value="Ensembl"/>
</dbReference>
<dbReference type="GO" id="GO:0055085">
    <property type="term" value="P:transmembrane transport"/>
    <property type="evidence" value="ECO:0000304"/>
    <property type="project" value="Reactome"/>
</dbReference>
<dbReference type="GO" id="GO:0006511">
    <property type="term" value="P:ubiquitin-dependent protein catabolic process"/>
    <property type="evidence" value="ECO:0000316"/>
    <property type="project" value="ParkinsonsUK-UCL"/>
</dbReference>
<dbReference type="CDD" id="cd16743">
    <property type="entry name" value="RING-HC_RNF5"/>
    <property type="match status" value="1"/>
</dbReference>
<dbReference type="FunFam" id="3.30.40.10:FF:000062">
    <property type="entry name" value="E3 ubiquitin-protein ligase RNF185"/>
    <property type="match status" value="1"/>
</dbReference>
<dbReference type="Gene3D" id="3.30.40.10">
    <property type="entry name" value="Zinc/RING finger domain, C3HC4 (zinc finger)"/>
    <property type="match status" value="1"/>
</dbReference>
<dbReference type="InterPro" id="IPR045103">
    <property type="entry name" value="RNF5/RNF185-like"/>
</dbReference>
<dbReference type="InterPro" id="IPR001841">
    <property type="entry name" value="Znf_RING"/>
</dbReference>
<dbReference type="InterPro" id="IPR013083">
    <property type="entry name" value="Znf_RING/FYVE/PHD"/>
</dbReference>
<dbReference type="InterPro" id="IPR017907">
    <property type="entry name" value="Znf_RING_CS"/>
</dbReference>
<dbReference type="PANTHER" id="PTHR12313">
    <property type="entry name" value="E3 UBIQUITIN-PROTEIN LIGASE RNF5-RELATED"/>
    <property type="match status" value="1"/>
</dbReference>
<dbReference type="Pfam" id="PF13920">
    <property type="entry name" value="zf-C3HC4_3"/>
    <property type="match status" value="1"/>
</dbReference>
<dbReference type="SMART" id="SM00184">
    <property type="entry name" value="RING"/>
    <property type="match status" value="1"/>
</dbReference>
<dbReference type="SUPFAM" id="SSF57850">
    <property type="entry name" value="RING/U-box"/>
    <property type="match status" value="1"/>
</dbReference>
<dbReference type="PROSITE" id="PS00518">
    <property type="entry name" value="ZF_RING_1"/>
    <property type="match status" value="1"/>
</dbReference>
<dbReference type="PROSITE" id="PS50089">
    <property type="entry name" value="ZF_RING_2"/>
    <property type="match status" value="1"/>
</dbReference>
<proteinExistence type="evidence at protein level"/>
<gene>
    <name evidence="14 17" type="primary">RNF5</name>
    <name evidence="15" type="synonym">G16</name>
    <name type="synonym">NG2</name>
    <name evidence="12" type="synonym">RMA1</name>
</gene>
<sequence length="180" mass="19881">MAAAEEEDGGPEGPNRERGGAGATFECNICLETAREAVVSVCGHLYCWPCLHQWLETRPERQECPVCKAGISREKVVPLYGRGSQKPQDPRLKTPPRPQGQRPAPESRGGFQPFGDTGGFHFSFGVGAFPFGFFTTVFNAHEPFRRGTGVDLGQGHPASSWQDSLFLFLAIFFFFWLLSI</sequence>
<organism>
    <name type="scientific">Homo sapiens</name>
    <name type="common">Human</name>
    <dbReference type="NCBI Taxonomy" id="9606"/>
    <lineage>
        <taxon>Eukaryota</taxon>
        <taxon>Metazoa</taxon>
        <taxon>Chordata</taxon>
        <taxon>Craniata</taxon>
        <taxon>Vertebrata</taxon>
        <taxon>Euteleostomi</taxon>
        <taxon>Mammalia</taxon>
        <taxon>Eutheria</taxon>
        <taxon>Euarchontoglires</taxon>
        <taxon>Primates</taxon>
        <taxon>Haplorrhini</taxon>
        <taxon>Catarrhini</taxon>
        <taxon>Hominidae</taxon>
        <taxon>Homo</taxon>
    </lineage>
</organism>
<feature type="initiator methionine" description="Removed" evidence="10 18 19 20">
    <location>
        <position position="1"/>
    </location>
</feature>
<feature type="chain" id="PRO_0000240393" description="E3 ubiquitin-protein ligase RNF5">
    <location>
        <begin position="2"/>
        <end position="180"/>
    </location>
</feature>
<feature type="transmembrane region" description="Helical" evidence="1">
    <location>
        <begin position="118"/>
        <end position="138"/>
    </location>
</feature>
<feature type="transmembrane region" description="Helical" evidence="1">
    <location>
        <begin position="160"/>
        <end position="180"/>
    </location>
</feature>
<feature type="zinc finger region" description="RING-type" evidence="2">
    <location>
        <begin position="27"/>
        <end position="68"/>
    </location>
</feature>
<feature type="region of interest" description="Disordered" evidence="3">
    <location>
        <begin position="79"/>
        <end position="110"/>
    </location>
</feature>
<feature type="modified residue" description="N-acetylalanine" evidence="10 18 19 20">
    <location>
        <position position="2"/>
    </location>
</feature>
<feature type="modified residue" description="Phosphoserine" evidence="21">
    <location>
        <position position="84"/>
    </location>
</feature>
<feature type="modified residue" description="Phosphothreonine" evidence="21">
    <location>
        <position position="94"/>
    </location>
</feature>
<feature type="modified residue" description="Phosphoserine" evidence="21">
    <location>
        <position position="107"/>
    </location>
</feature>
<feature type="mutagenesis site" description="Loss of E3 ubiquitin-protein ligase activity." evidence="4">
    <original>C</original>
    <variation>S</variation>
    <location>
        <position position="42"/>
    </location>
</feature>
<feature type="sequence conflict" description="In Ref. 3; CAB51286." evidence="16" ref="3">
    <original>G</original>
    <variation>S</variation>
    <location>
        <position position="22"/>
    </location>
</feature>
<feature type="sequence conflict" description="In Ref. 3; CAB51286." evidence="16" ref="3">
    <original>E</original>
    <variation>D</variation>
    <location>
        <position position="60"/>
    </location>
</feature>
<feature type="sequence conflict" description="In Ref. 3; CAB51286." evidence="16" ref="3">
    <original>T</original>
    <variation>A</variation>
    <location>
        <position position="117"/>
    </location>
</feature>
<feature type="sequence conflict" description="In Ref. 3; CAB51286." evidence="16" ref="3">
    <original>T</original>
    <variation>A</variation>
    <location>
        <position position="148"/>
    </location>
</feature>
<comment type="function">
    <text evidence="4 5 6 7 8 9">Membrane-bound E3 ubiquitin-protein ligase that mediates ubiquitination of target proteins (PubMed:11329381, PubMed:12861019, PubMed:16176924, PubMed:19269966, PubMed:19285439). May function together with E2 ubiquitin-conjugating enzymes UBE2D1/UBCH5A and UBE2D2/UBC4 (PubMed:11329381). Mediates ubiquitination of PXN/paxillin,thereby regulating cell motility and localization of PXN/paxillin (PubMed:12861019). Catalyzes ubiquitination of Salmonella type III secreted protein sopA (PubMed:16176924). Mediates the 'Lys-63'-linked polyubiquitination of JKAMP thereby regulating JKAMP function by decreasing its association with components of the proteasome and ERAD; the ubiquitination appears to involve E2 ubiquitin-conjugating enzyme UBE2N (PubMed:19269966). Mediates the 'Lys-48'-linked polyubiquitination of STING1 at 'Lys-150' leading to its proteasomal degradation; the ubiquitination occurs in mitochondria after viral transfection and regulates antiviral responses (PubMed:19285439). Catalyzes ubiquitination and subsequent degradation of ATG4B, thereby inhibiting autophagy (PubMed:23093945).</text>
</comment>
<comment type="catalytic activity">
    <reaction evidence="7 8 9">
        <text>S-ubiquitinyl-[E2 ubiquitin-conjugating enzyme]-L-cysteine + [acceptor protein]-L-lysine = [E2 ubiquitin-conjugating enzyme]-L-cysteine + N(6)-ubiquitinyl-[acceptor protein]-L-lysine.</text>
        <dbReference type="EC" id="2.3.2.27"/>
    </reaction>
</comment>
<comment type="pathway">
    <text evidence="7 8 9">Protein modification; protein ubiquitination.</text>
</comment>
<comment type="subunit">
    <text evidence="5 7 8">Interacts with PXN (PubMed:12861019). Interacts with Salmonella typhimurium sopA (PubMed:12861019). Interacts with JKAMP (PubMed:19269966). Interacts with STING1; the interaction of endogenous proteins is dependent on viral infection (PubMed:19285439).</text>
</comment>
<comment type="interaction">
    <interactant intactId="EBI-348482">
        <id>Q99942</id>
    </interactant>
    <interactant intactId="EBI-348517">
        <id>O95870</id>
        <label>ABHD16A</label>
    </interactant>
    <organismsDiffer>false</organismsDiffer>
    <experiments>9</experiments>
</comment>
<comment type="interaction">
    <interactant intactId="EBI-348482">
        <id>Q99942</id>
    </interactant>
    <interactant intactId="EBI-714543">
        <id>Q15041</id>
        <label>ARL6IP1</label>
    </interactant>
    <organismsDiffer>false</organismsDiffer>
    <experiments>3</experiments>
</comment>
<comment type="interaction">
    <interactant intactId="EBI-348482">
        <id>Q99942</id>
    </interactant>
    <interactant intactId="EBI-349854">
        <id>P13569</id>
        <label>CFTR</label>
    </interactant>
    <organismsDiffer>false</organismsDiffer>
    <experiments>8</experiments>
</comment>
<comment type="interaction">
    <interactant intactId="EBI-348482">
        <id>Q99942</id>
    </interactant>
    <interactant intactId="EBI-8646596">
        <id>P49447</id>
        <label>CYB561</label>
    </interactant>
    <organismsDiffer>false</organismsDiffer>
    <experiments>3</experiments>
</comment>
<comment type="interaction">
    <interactant intactId="EBI-348482">
        <id>Q99942</id>
    </interactant>
    <interactant intactId="EBI-10269179">
        <id>Q8NBI2</id>
        <label>CYB561A3</label>
    </interactant>
    <organismsDiffer>false</organismsDiffer>
    <experiments>6</experiments>
</comment>
<comment type="interaction">
    <interactant intactId="EBI-348482">
        <id>Q99942</id>
    </interactant>
    <interactant intactId="EBI-12831978">
        <id>Q6ZPD8</id>
        <label>DGAT2L6</label>
    </interactant>
    <organismsDiffer>false</organismsDiffer>
    <experiments>3</experiments>
</comment>
<comment type="interaction">
    <interactant intactId="EBI-348482">
        <id>Q99942</id>
    </interactant>
    <interactant intactId="EBI-12118888">
        <id>Q96D05-2</id>
        <label>FAM241B</label>
    </interactant>
    <organismsDiffer>false</organismsDiffer>
    <experiments>3</experiments>
</comment>
<comment type="interaction">
    <interactant intactId="EBI-348482">
        <id>Q99942</id>
    </interactant>
    <interactant intactId="EBI-8503746">
        <id>Q9Y5U4</id>
        <label>INSIG2</label>
    </interactant>
    <organismsDiffer>false</organismsDiffer>
    <experiments>6</experiments>
</comment>
<comment type="interaction">
    <interactant intactId="EBI-348482">
        <id>Q99942</id>
    </interactant>
    <interactant intactId="EBI-750776">
        <id>O95214</id>
        <label>LEPROTL1</label>
    </interactant>
    <organismsDiffer>false</organismsDiffer>
    <experiments>3</experiments>
</comment>
<comment type="interaction">
    <interactant intactId="EBI-348482">
        <id>Q99942</id>
    </interactant>
    <interactant intactId="EBI-2808234">
        <id>P11836</id>
        <label>MS4A1</label>
    </interactant>
    <organismsDiffer>false</organismsDiffer>
    <experiments>3</experiments>
</comment>
<comment type="interaction">
    <interactant intactId="EBI-348482">
        <id>Q99942</id>
    </interactant>
    <interactant intactId="EBI-748974">
        <id>Q96CV9</id>
        <label>OPTN</label>
    </interactant>
    <organismsDiffer>false</organismsDiffer>
    <experiments>3</experiments>
</comment>
<comment type="interaction">
    <interactant intactId="EBI-348482">
        <id>Q99942</id>
    </interactant>
    <interactant intactId="EBI-1054848">
        <id>Q9P0S3</id>
        <label>ORMDL1</label>
    </interactant>
    <organismsDiffer>false</organismsDiffer>
    <experiments>3</experiments>
</comment>
<comment type="interaction">
    <interactant intactId="EBI-348482">
        <id>Q99942</id>
    </interactant>
    <interactant intactId="EBI-721750">
        <id>Q8N138</id>
        <label>ORMDL3</label>
    </interactant>
    <organismsDiffer>false</organismsDiffer>
    <experiments>3</experiments>
</comment>
<comment type="interaction">
    <interactant intactId="EBI-348482">
        <id>Q99942</id>
    </interactant>
    <interactant intactId="EBI-608347">
        <id>Q04941</id>
        <label>PLP2</label>
    </interactant>
    <organismsDiffer>false</organismsDiffer>
    <experiments>3</experiments>
</comment>
<comment type="interaction">
    <interactant intactId="EBI-348482">
        <id>Q99942</id>
    </interactant>
    <interactant intactId="EBI-11721828">
        <id>Q8IY26</id>
        <label>PLPP6</label>
    </interactant>
    <organismsDiffer>false</organismsDiffer>
    <experiments>3</experiments>
</comment>
<comment type="interaction">
    <interactant intactId="EBI-348482">
        <id>Q99942</id>
    </interactant>
    <interactant intactId="EBI-2506064">
        <id>O60831</id>
        <label>PRAF2</label>
    </interactant>
    <organismsDiffer>false</organismsDiffer>
    <experiments>3</experiments>
</comment>
<comment type="interaction">
    <interactant intactId="EBI-348482">
        <id>Q99942</id>
    </interactant>
    <interactant intactId="EBI-702209">
        <id>P49023</id>
        <label>PXN</label>
    </interactant>
    <organismsDiffer>false</organismsDiffer>
    <experiments>6</experiments>
</comment>
<comment type="interaction">
    <interactant intactId="EBI-348482">
        <id>Q99942</id>
    </interactant>
    <interactant intactId="EBI-712367">
        <id>Q9UI14</id>
        <label>RABAC1</label>
    </interactant>
    <organismsDiffer>false</organismsDiffer>
    <experiments>3</experiments>
</comment>
<comment type="interaction">
    <interactant intactId="EBI-348482">
        <id>Q99942</id>
    </interactant>
    <interactant intactId="EBI-9916444">
        <id>Q8TEB9</id>
        <label>RHBDD1</label>
    </interactant>
    <organismsDiffer>false</organismsDiffer>
    <experiments>4</experiments>
</comment>
<comment type="interaction">
    <interactant intactId="EBI-348482">
        <id>Q99942</id>
    </interactant>
    <interactant intactId="EBI-2340249">
        <id>Q96GF1</id>
        <label>RNF185</label>
    </interactant>
    <organismsDiffer>false</organismsDiffer>
    <experiments>4</experiments>
</comment>
<comment type="interaction">
    <interactant intactId="EBI-348482">
        <id>Q99942</id>
    </interactant>
    <interactant intactId="EBI-348482">
        <id>Q99942</id>
        <label>RNF5</label>
    </interactant>
    <organismsDiffer>false</organismsDiffer>
    <experiments>4</experiments>
</comment>
<comment type="interaction">
    <interactant intactId="EBI-348482">
        <id>Q99942</id>
    </interactant>
    <interactant intactId="EBI-8636004">
        <id>Q96GQ5</id>
        <label>RUSF1</label>
    </interactant>
    <organismsDiffer>false</organismsDiffer>
    <experiments>3</experiments>
</comment>
<comment type="interaction">
    <interactant intactId="EBI-348482">
        <id>Q99942</id>
    </interactant>
    <interactant intactId="EBI-2684237">
        <id>O00767</id>
        <label>SCD</label>
    </interactant>
    <organismsDiffer>false</organismsDiffer>
    <experiments>3</experiments>
</comment>
<comment type="interaction">
    <interactant intactId="EBI-348482">
        <id>Q99942</id>
    </interactant>
    <interactant intactId="EBI-8652744">
        <id>Q96IW7</id>
        <label>SEC22A</label>
    </interactant>
    <organismsDiffer>false</organismsDiffer>
    <experiments>3</experiments>
</comment>
<comment type="interaction">
    <interactant intactId="EBI-348482">
        <id>Q99942</id>
    </interactant>
    <interactant intactId="EBI-745376">
        <id>P43005</id>
        <label>SLC1A1</label>
    </interactant>
    <organismsDiffer>false</organismsDiffer>
    <experiments>6</experiments>
</comment>
<comment type="interaction">
    <interactant intactId="EBI-348482">
        <id>Q99942</id>
    </interactant>
    <interactant intactId="EBI-356576">
        <id>Q15758</id>
        <label>SLC1A5</label>
    </interactant>
    <organismsDiffer>false</organismsDiffer>
    <experiments>4</experiments>
</comment>
<comment type="interaction">
    <interactant intactId="EBI-348482">
        <id>Q99942</id>
    </interactant>
    <interactant intactId="EBI-13389236">
        <id>Q7Z769</id>
        <label>SLC35E3</label>
    </interactant>
    <organismsDiffer>false</organismsDiffer>
    <experiments>3</experiments>
</comment>
<comment type="interaction">
    <interactant intactId="EBI-348482">
        <id>Q99942</id>
    </interactant>
    <interactant intactId="EBI-723083">
        <id>Q96QD8</id>
        <label>SLC38A2</label>
    </interactant>
    <organismsDiffer>false</organismsDiffer>
    <experiments>3</experiments>
</comment>
<comment type="interaction">
    <interactant intactId="EBI-348482">
        <id>Q99942</id>
    </interactant>
    <interactant intactId="EBI-10314552">
        <id>Q9NVC3</id>
        <label>SLC38A7</label>
    </interactant>
    <organismsDiffer>false</organismsDiffer>
    <experiments>8</experiments>
</comment>
<comment type="interaction">
    <interactant intactId="EBI-348482">
        <id>Q99942</id>
    </interactant>
    <interactant intactId="EBI-10171534">
        <id>A0PK00</id>
        <label>TMEM120B</label>
    </interactant>
    <organismsDiffer>false</organismsDiffer>
    <experiments>3</experiments>
</comment>
<comment type="interaction">
    <interactant intactId="EBI-348482">
        <id>Q99942</id>
    </interactant>
    <interactant intactId="EBI-10315004">
        <id>Q9NWH2</id>
        <label>TMEM242</label>
    </interactant>
    <organismsDiffer>false</organismsDiffer>
    <experiments>3</experiments>
</comment>
<comment type="interaction">
    <interactant intactId="EBI-348482">
        <id>Q99942</id>
    </interactant>
    <interactant intactId="EBI-743540">
        <id>P51668</id>
        <label>UBE2D1</label>
    </interactant>
    <organismsDiffer>false</organismsDiffer>
    <experiments>10</experiments>
</comment>
<comment type="interaction">
    <interactant intactId="EBI-348482">
        <id>Q99942</id>
    </interactant>
    <interactant intactId="EBI-347677">
        <id>P62837</id>
        <label>UBE2D2</label>
    </interactant>
    <organismsDiffer>false</organismsDiffer>
    <experiments>9</experiments>
</comment>
<comment type="interaction">
    <interactant intactId="EBI-348482">
        <id>Q99942</id>
    </interactant>
    <interactant intactId="EBI-348268">
        <id>P61077</id>
        <label>UBE2D3</label>
    </interactant>
    <organismsDiffer>false</organismsDiffer>
    <experiments>11</experiments>
</comment>
<comment type="interaction">
    <interactant intactId="EBI-348482">
        <id>Q99942</id>
    </interactant>
    <interactant intactId="EBI-745527">
        <id>Q9Y2X8</id>
        <label>UBE2D4</label>
    </interactant>
    <organismsDiffer>false</organismsDiffer>
    <experiments>7</experiments>
</comment>
<comment type="interaction">
    <interactant intactId="EBI-348482">
        <id>Q99942</id>
    </interactant>
    <interactant intactId="EBI-2129763">
        <id>Q96LR5</id>
        <label>UBE2E2</label>
    </interactant>
    <organismsDiffer>false</organismsDiffer>
    <experiments>10</experiments>
</comment>
<comment type="interaction">
    <interactant intactId="EBI-348482">
        <id>Q99942</id>
    </interactant>
    <interactant intactId="EBI-348496">
        <id>Q969T4</id>
        <label>UBE2E3</label>
    </interactant>
    <organismsDiffer>false</organismsDiffer>
    <experiments>11</experiments>
</comment>
<comment type="interaction">
    <interactant intactId="EBI-348482">
        <id>Q99942</id>
    </interactant>
    <interactant intactId="EBI-473850">
        <id>P61086</id>
        <label>UBE2K</label>
    </interactant>
    <organismsDiffer>false</organismsDiffer>
    <experiments>11</experiments>
</comment>
<comment type="interaction">
    <interactant intactId="EBI-348482">
        <id>Q99942</id>
    </interactant>
    <interactant intactId="EBI-716589">
        <id>Q96B02</id>
        <label>UBE2W</label>
    </interactant>
    <organismsDiffer>false</organismsDiffer>
    <experiments>4</experiments>
</comment>
<comment type="interaction">
    <interactant intactId="EBI-348482">
        <id>Q99942</id>
    </interactant>
    <interactant intactId="EBI-10285774">
        <id>Q96FI0</id>
        <label>UBE2W</label>
    </interactant>
    <organismsDiffer>false</organismsDiffer>
    <experiments>3</experiments>
</comment>
<comment type="interaction">
    <interactant intactId="EBI-348482">
        <id>Q99942</id>
    </interactant>
    <interactant intactId="EBI-745871">
        <id>Q9HAC8</id>
        <label>UBTD1</label>
    </interactant>
    <organismsDiffer>false</organismsDiffer>
    <experiments>5</experiments>
</comment>
<comment type="interaction">
    <interactant intactId="EBI-348482">
        <id>Q99942</id>
    </interactant>
    <interactant intactId="EBI-7850136">
        <id>Q9Y548</id>
        <label>YIPF1</label>
    </interactant>
    <organismsDiffer>false</organismsDiffer>
    <experiments>3</experiments>
</comment>
<comment type="interaction">
    <interactant intactId="EBI-348482">
        <id>Q99942</id>
    </interactant>
    <interactant intactId="EBI-751204">
        <id>Q9BWQ6</id>
        <label>YIPF2</label>
    </interactant>
    <organismsDiffer>false</organismsDiffer>
    <experiments>6</experiments>
</comment>
<comment type="interaction">
    <interactant intactId="EBI-348482">
        <id>Q99942</id>
    </interactant>
    <interactant intactId="EBI-751253">
        <id>Q9BSR8</id>
        <label>YIPF4</label>
    </interactant>
    <organismsDiffer>false</organismsDiffer>
    <experiments>3</experiments>
</comment>
<comment type="interaction">
    <interactant intactId="EBI-348482">
        <id>Q99942</id>
    </interactant>
    <interactant intactId="EBI-2510804">
        <id>Q5VVQ6</id>
        <label>YOD1</label>
    </interactant>
    <organismsDiffer>false</organismsDiffer>
    <experiments>3</experiments>
</comment>
<comment type="interaction">
    <interactant intactId="EBI-348482">
        <id>Q99942</id>
    </interactant>
    <interactant intactId="EBI-10254561">
        <id>Q6UX98</id>
        <label>ZDHHC24</label>
    </interactant>
    <organismsDiffer>false</organismsDiffer>
    <experiments>3</experiments>
</comment>
<comment type="subcellular location">
    <subcellularLocation>
        <location evidence="11">Cell membrane</location>
        <topology evidence="1">Multi-pass membrane protein</topology>
    </subcellularLocation>
    <subcellularLocation>
        <location evidence="8">Mitochondrion membrane</location>
        <topology evidence="1">Multi-pass membrane protein</topology>
    </subcellularLocation>
    <subcellularLocation>
        <location evidence="8">Endoplasmic reticulum membrane</location>
        <topology evidence="1">Multi-pass membrane protein</topology>
    </subcellularLocation>
    <text evidence="11">Predominantly located in the plasma membrane, with some localization occurring within cytoplasmic organelles.</text>
</comment>
<comment type="tissue specificity">
    <text evidence="11">Widely expressed.</text>
</comment>
<comment type="similarity">
    <text evidence="16">Belongs to the RNF5 family.</text>
</comment>
<protein>
    <recommendedName>
        <fullName evidence="16">E3 ubiquitin-protein ligase RNF5</fullName>
        <ecNumber evidence="7 8 9">2.3.2.27</ecNumber>
    </recommendedName>
    <alternativeName>
        <fullName evidence="14">RING finger protein 5</fullName>
    </alternativeName>
    <alternativeName>
        <fullName evidence="13">Ram1 homolog</fullName>
        <shortName evidence="13">HsRma1</shortName>
    </alternativeName>
</protein>